<evidence type="ECO:0000255" key="1">
    <source>
        <dbReference type="HAMAP-Rule" id="MF_01124"/>
    </source>
</evidence>
<comment type="function">
    <text evidence="1">Enables the recognition and targeting of unfolded and aggregated proteins to the ClpC protease or to other proteins involved in proteolysis.</text>
</comment>
<comment type="subunit">
    <text evidence="1">Homodimer.</text>
</comment>
<comment type="domain">
    <text>The N-terminal domain probably binds unfolded/aggregated proteins; the C-terminal domain interacts with ClpC.</text>
</comment>
<comment type="similarity">
    <text evidence="1">Belongs to the MecA family.</text>
</comment>
<protein>
    <recommendedName>
        <fullName evidence="1">Adapter protein MecA</fullName>
    </recommendedName>
</protein>
<proteinExistence type="inferred from homology"/>
<accession>Q8E7L9</accession>
<sequence length="251" mass="29055">MEMKQISETTLKITISMEDLEDRGMELKDFLIPQEKTEEFFYSVMDELDLPENFKNSGMLSFRVTPKKDRIDVFVTKSELSKDLNLEELADLGDISKMSPEDFFKTLEQSMLEKGDTDAHAKLAEIENMMDKATQEVVEENVSEEQPEKEVETIGYVHYVFDFDNIEAVVRFSQTIDFPIEASELYKNGKGYHMTILLDLENQPSYFANLMYARMLEHANVGTKTRAYLKEHSIQLIHDDAISKLQMIEMG</sequence>
<dbReference type="EMBL" id="AL766844">
    <property type="protein sequence ID" value="CAD45780.1"/>
    <property type="molecule type" value="Genomic_DNA"/>
</dbReference>
<dbReference type="RefSeq" id="WP_000425371.1">
    <property type="nucleotide sequence ID" value="NC_004368.1"/>
</dbReference>
<dbReference type="SMR" id="Q8E7L9"/>
<dbReference type="GeneID" id="66885116"/>
<dbReference type="KEGG" id="san:gbs0135"/>
<dbReference type="eggNOG" id="COG4862">
    <property type="taxonomic scope" value="Bacteria"/>
</dbReference>
<dbReference type="HOGENOM" id="CLU_071496_1_0_9"/>
<dbReference type="Proteomes" id="UP000000823">
    <property type="component" value="Chromosome"/>
</dbReference>
<dbReference type="GO" id="GO:0030674">
    <property type="term" value="F:protein-macromolecule adaptor activity"/>
    <property type="evidence" value="ECO:0007669"/>
    <property type="project" value="UniProtKB-UniRule"/>
</dbReference>
<dbReference type="Gene3D" id="3.30.70.1950">
    <property type="match status" value="1"/>
</dbReference>
<dbReference type="HAMAP" id="MF_01124">
    <property type="entry name" value="MecA"/>
    <property type="match status" value="1"/>
</dbReference>
<dbReference type="InterPro" id="IPR038471">
    <property type="entry name" value="MecA_C_sf"/>
</dbReference>
<dbReference type="InterPro" id="IPR008681">
    <property type="entry name" value="Neg-reg_MecA"/>
</dbReference>
<dbReference type="NCBIfam" id="NF002643">
    <property type="entry name" value="PRK02315.1-4"/>
    <property type="match status" value="1"/>
</dbReference>
<dbReference type="PANTHER" id="PTHR39161">
    <property type="entry name" value="ADAPTER PROTEIN MECA"/>
    <property type="match status" value="1"/>
</dbReference>
<dbReference type="PANTHER" id="PTHR39161:SF1">
    <property type="entry name" value="ADAPTER PROTEIN MECA 1"/>
    <property type="match status" value="1"/>
</dbReference>
<dbReference type="Pfam" id="PF05389">
    <property type="entry name" value="MecA"/>
    <property type="match status" value="1"/>
</dbReference>
<dbReference type="PIRSF" id="PIRSF029008">
    <property type="entry name" value="MecA"/>
    <property type="match status" value="1"/>
</dbReference>
<organism>
    <name type="scientific">Streptococcus agalactiae serotype III (strain NEM316)</name>
    <dbReference type="NCBI Taxonomy" id="211110"/>
    <lineage>
        <taxon>Bacteria</taxon>
        <taxon>Bacillati</taxon>
        <taxon>Bacillota</taxon>
        <taxon>Bacilli</taxon>
        <taxon>Lactobacillales</taxon>
        <taxon>Streptococcaceae</taxon>
        <taxon>Streptococcus</taxon>
    </lineage>
</organism>
<name>MECA_STRA3</name>
<feature type="chain" id="PRO_0000212286" description="Adapter protein MecA">
    <location>
        <begin position="1"/>
        <end position="251"/>
    </location>
</feature>
<reference key="1">
    <citation type="journal article" date="2002" name="Mol. Microbiol.">
        <title>Genome sequence of Streptococcus agalactiae, a pathogen causing invasive neonatal disease.</title>
        <authorList>
            <person name="Glaser P."/>
            <person name="Rusniok C."/>
            <person name="Buchrieser C."/>
            <person name="Chevalier F."/>
            <person name="Frangeul L."/>
            <person name="Msadek T."/>
            <person name="Zouine M."/>
            <person name="Couve E."/>
            <person name="Lalioui L."/>
            <person name="Poyart C."/>
            <person name="Trieu-Cuot P."/>
            <person name="Kunst F."/>
        </authorList>
    </citation>
    <scope>NUCLEOTIDE SEQUENCE [LARGE SCALE GENOMIC DNA]</scope>
    <source>
        <strain>NEM316</strain>
    </source>
</reference>
<gene>
    <name evidence="1" type="primary">mecA</name>
    <name type="ordered locus">gbs0135</name>
</gene>